<comment type="function">
    <text evidence="1">Catalyzes the hydrolysis of the adenine ring of phosphoribosyl-AMP.</text>
</comment>
<comment type="catalytic activity">
    <reaction evidence="1">
        <text>1-(5-phospho-beta-D-ribosyl)-5'-AMP + H2O = 1-(5-phospho-beta-D-ribosyl)-5-[(5-phospho-beta-D-ribosylamino)methylideneamino]imidazole-4-carboxamide</text>
        <dbReference type="Rhea" id="RHEA:20049"/>
        <dbReference type="ChEBI" id="CHEBI:15377"/>
        <dbReference type="ChEBI" id="CHEBI:58435"/>
        <dbReference type="ChEBI" id="CHEBI:59457"/>
        <dbReference type="EC" id="3.5.4.19"/>
    </reaction>
</comment>
<comment type="cofactor">
    <cofactor evidence="1">
        <name>Mg(2+)</name>
        <dbReference type="ChEBI" id="CHEBI:18420"/>
    </cofactor>
    <text evidence="1">Binds 1 Mg(2+) ion per subunit.</text>
</comment>
<comment type="cofactor">
    <cofactor evidence="1">
        <name>Zn(2+)</name>
        <dbReference type="ChEBI" id="CHEBI:29105"/>
    </cofactor>
    <text evidence="1">Binds 1 zinc ion per subunit.</text>
</comment>
<comment type="pathway">
    <text evidence="1">Amino-acid biosynthesis; L-histidine biosynthesis; L-histidine from 5-phospho-alpha-D-ribose 1-diphosphate: step 3/9.</text>
</comment>
<comment type="subunit">
    <text evidence="1">Homodimer.</text>
</comment>
<comment type="subcellular location">
    <subcellularLocation>
        <location evidence="1">Cytoplasm</location>
    </subcellularLocation>
</comment>
<comment type="similarity">
    <text evidence="1">Belongs to the PRA-CH family.</text>
</comment>
<keyword id="KW-0028">Amino-acid biosynthesis</keyword>
<keyword id="KW-0963">Cytoplasm</keyword>
<keyword id="KW-0368">Histidine biosynthesis</keyword>
<keyword id="KW-0378">Hydrolase</keyword>
<keyword id="KW-0460">Magnesium</keyword>
<keyword id="KW-0479">Metal-binding</keyword>
<keyword id="KW-1185">Reference proteome</keyword>
<keyword id="KW-0862">Zinc</keyword>
<evidence type="ECO:0000255" key="1">
    <source>
        <dbReference type="HAMAP-Rule" id="MF_01021"/>
    </source>
</evidence>
<organism>
    <name type="scientific">Neisseria gonorrhoeae (strain ATCC 700825 / FA 1090)</name>
    <dbReference type="NCBI Taxonomy" id="242231"/>
    <lineage>
        <taxon>Bacteria</taxon>
        <taxon>Pseudomonadati</taxon>
        <taxon>Pseudomonadota</taxon>
        <taxon>Betaproteobacteria</taxon>
        <taxon>Neisseriales</taxon>
        <taxon>Neisseriaceae</taxon>
        <taxon>Neisseria</taxon>
    </lineage>
</organism>
<sequence length="131" mass="14818">MDKNLLEAVKFDEKGLVCAIAQDAETKRVLMVAWMNAEALQKTVETGFAHYYSRSRQKQWMKGEESGHTQKVRELRLDCDGDTIVMLIAQNGGIACHTGRESCFYKKWNGGAWETADAVLKDEKEIYGSTH</sequence>
<gene>
    <name evidence="1" type="primary">hisI</name>
    <name type="ordered locus">NGO_0210</name>
</gene>
<accession>Q5FA24</accession>
<feature type="chain" id="PRO_0000229826" description="Phosphoribosyl-AMP cyclohydrolase">
    <location>
        <begin position="1"/>
        <end position="131"/>
    </location>
</feature>
<feature type="binding site" evidence="1">
    <location>
        <position position="78"/>
    </location>
    <ligand>
        <name>Mg(2+)</name>
        <dbReference type="ChEBI" id="CHEBI:18420"/>
    </ligand>
</feature>
<feature type="binding site" evidence="1">
    <location>
        <position position="79"/>
    </location>
    <ligand>
        <name>Zn(2+)</name>
        <dbReference type="ChEBI" id="CHEBI:29105"/>
        <note>ligand shared between dimeric partners</note>
    </ligand>
</feature>
<feature type="binding site" evidence="1">
    <location>
        <position position="80"/>
    </location>
    <ligand>
        <name>Mg(2+)</name>
        <dbReference type="ChEBI" id="CHEBI:18420"/>
    </ligand>
</feature>
<feature type="binding site" evidence="1">
    <location>
        <position position="82"/>
    </location>
    <ligand>
        <name>Mg(2+)</name>
        <dbReference type="ChEBI" id="CHEBI:18420"/>
    </ligand>
</feature>
<feature type="binding site" evidence="1">
    <location>
        <position position="96"/>
    </location>
    <ligand>
        <name>Zn(2+)</name>
        <dbReference type="ChEBI" id="CHEBI:29105"/>
        <note>ligand shared between dimeric partners</note>
    </ligand>
</feature>
<feature type="binding site" evidence="1">
    <location>
        <position position="103"/>
    </location>
    <ligand>
        <name>Zn(2+)</name>
        <dbReference type="ChEBI" id="CHEBI:29105"/>
        <note>ligand shared between dimeric partners</note>
    </ligand>
</feature>
<reference key="1">
    <citation type="submission" date="2003-03" db="EMBL/GenBank/DDBJ databases">
        <title>The complete genome sequence of Neisseria gonorrhoeae.</title>
        <authorList>
            <person name="Lewis L.A."/>
            <person name="Gillaspy A.F."/>
            <person name="McLaughlin R.E."/>
            <person name="Gipson M."/>
            <person name="Ducey T.F."/>
            <person name="Ownbey T."/>
            <person name="Hartman K."/>
            <person name="Nydick C."/>
            <person name="Carson M.B."/>
            <person name="Vaughn J."/>
            <person name="Thomson C."/>
            <person name="Song L."/>
            <person name="Lin S."/>
            <person name="Yuan X."/>
            <person name="Najar F."/>
            <person name="Zhan M."/>
            <person name="Ren Q."/>
            <person name="Zhu H."/>
            <person name="Qi S."/>
            <person name="Kenton S.M."/>
            <person name="Lai H."/>
            <person name="White J.D."/>
            <person name="Clifton S."/>
            <person name="Roe B.A."/>
            <person name="Dyer D.W."/>
        </authorList>
    </citation>
    <scope>NUCLEOTIDE SEQUENCE [LARGE SCALE GENOMIC DNA]</scope>
    <source>
        <strain>ATCC 700825 / FA 1090</strain>
    </source>
</reference>
<protein>
    <recommendedName>
        <fullName evidence="1">Phosphoribosyl-AMP cyclohydrolase</fullName>
        <shortName evidence="1">PRA-CH</shortName>
        <ecNumber evidence="1">3.5.4.19</ecNumber>
    </recommendedName>
</protein>
<proteinExistence type="inferred from homology"/>
<dbReference type="EC" id="3.5.4.19" evidence="1"/>
<dbReference type="EMBL" id="AE004969">
    <property type="protein sequence ID" value="AAW88963.1"/>
    <property type="molecule type" value="Genomic_DNA"/>
</dbReference>
<dbReference type="RefSeq" id="WP_003687532.1">
    <property type="nucleotide sequence ID" value="NC_002946.2"/>
</dbReference>
<dbReference type="RefSeq" id="YP_207375.1">
    <property type="nucleotide sequence ID" value="NC_002946.2"/>
</dbReference>
<dbReference type="SMR" id="Q5FA24"/>
<dbReference type="STRING" id="242231.NGO_0210"/>
<dbReference type="GeneID" id="66752541"/>
<dbReference type="KEGG" id="ngo:NGO_0210"/>
<dbReference type="PATRIC" id="fig|242231.10.peg.261"/>
<dbReference type="HOGENOM" id="CLU_048577_5_0_4"/>
<dbReference type="UniPathway" id="UPA00031">
    <property type="reaction ID" value="UER00008"/>
</dbReference>
<dbReference type="Proteomes" id="UP000000535">
    <property type="component" value="Chromosome"/>
</dbReference>
<dbReference type="GO" id="GO:0005737">
    <property type="term" value="C:cytoplasm"/>
    <property type="evidence" value="ECO:0007669"/>
    <property type="project" value="UniProtKB-SubCell"/>
</dbReference>
<dbReference type="GO" id="GO:0000287">
    <property type="term" value="F:magnesium ion binding"/>
    <property type="evidence" value="ECO:0007669"/>
    <property type="project" value="UniProtKB-UniRule"/>
</dbReference>
<dbReference type="GO" id="GO:0004635">
    <property type="term" value="F:phosphoribosyl-AMP cyclohydrolase activity"/>
    <property type="evidence" value="ECO:0007669"/>
    <property type="project" value="UniProtKB-UniRule"/>
</dbReference>
<dbReference type="GO" id="GO:0008270">
    <property type="term" value="F:zinc ion binding"/>
    <property type="evidence" value="ECO:0007669"/>
    <property type="project" value="UniProtKB-UniRule"/>
</dbReference>
<dbReference type="GO" id="GO:0000105">
    <property type="term" value="P:L-histidine biosynthetic process"/>
    <property type="evidence" value="ECO:0007669"/>
    <property type="project" value="UniProtKB-UniRule"/>
</dbReference>
<dbReference type="FunFam" id="3.10.20.810:FF:000001">
    <property type="entry name" value="Histidine biosynthesis bifunctional protein HisIE"/>
    <property type="match status" value="1"/>
</dbReference>
<dbReference type="Gene3D" id="3.10.20.810">
    <property type="entry name" value="Phosphoribosyl-AMP cyclohydrolase"/>
    <property type="match status" value="1"/>
</dbReference>
<dbReference type="HAMAP" id="MF_01021">
    <property type="entry name" value="HisI"/>
    <property type="match status" value="1"/>
</dbReference>
<dbReference type="InterPro" id="IPR026660">
    <property type="entry name" value="PRA-CH"/>
</dbReference>
<dbReference type="InterPro" id="IPR002496">
    <property type="entry name" value="PRib_AMP_CycHydrolase_dom"/>
</dbReference>
<dbReference type="InterPro" id="IPR038019">
    <property type="entry name" value="PRib_AMP_CycHydrolase_sf"/>
</dbReference>
<dbReference type="NCBIfam" id="NF000768">
    <property type="entry name" value="PRK00051.1"/>
    <property type="match status" value="1"/>
</dbReference>
<dbReference type="PANTHER" id="PTHR42945">
    <property type="entry name" value="HISTIDINE BIOSYNTHESIS BIFUNCTIONAL PROTEIN"/>
    <property type="match status" value="1"/>
</dbReference>
<dbReference type="PANTHER" id="PTHR42945:SF1">
    <property type="entry name" value="HISTIDINE BIOSYNTHESIS BIFUNCTIONAL PROTEIN HIS7"/>
    <property type="match status" value="1"/>
</dbReference>
<dbReference type="Pfam" id="PF01502">
    <property type="entry name" value="PRA-CH"/>
    <property type="match status" value="1"/>
</dbReference>
<dbReference type="SUPFAM" id="SSF141734">
    <property type="entry name" value="HisI-like"/>
    <property type="match status" value="1"/>
</dbReference>
<name>HIS3_NEIG1</name>